<reference key="1">
    <citation type="journal article" date="2004" name="Syst. Biol.">
        <title>A molecular supermatrix of the rabbits and hares (Leporidae) allows for the identification of five intercontinental exchanges during the Miocene.</title>
        <authorList>
            <person name="Matthee C.A."/>
            <person name="van Vuuren B.J."/>
            <person name="Bell D."/>
            <person name="Robinson T.J."/>
        </authorList>
    </citation>
    <scope>NUCLEOTIDE SEQUENCE [GENOMIC DNA]</scope>
</reference>
<feature type="chain" id="PRO_0000061629" description="Cytochrome b">
    <location>
        <begin position="1"/>
        <end position="379"/>
    </location>
</feature>
<feature type="transmembrane region" description="Helical" evidence="2">
    <location>
        <begin position="33"/>
        <end position="53"/>
    </location>
</feature>
<feature type="transmembrane region" description="Helical" evidence="2">
    <location>
        <begin position="77"/>
        <end position="98"/>
    </location>
</feature>
<feature type="transmembrane region" description="Helical" evidence="2">
    <location>
        <begin position="113"/>
        <end position="133"/>
    </location>
</feature>
<feature type="transmembrane region" description="Helical" evidence="2">
    <location>
        <begin position="178"/>
        <end position="198"/>
    </location>
</feature>
<feature type="transmembrane region" description="Helical" evidence="2">
    <location>
        <begin position="226"/>
        <end position="246"/>
    </location>
</feature>
<feature type="transmembrane region" description="Helical" evidence="2">
    <location>
        <begin position="288"/>
        <end position="308"/>
    </location>
</feature>
<feature type="transmembrane region" description="Helical" evidence="2">
    <location>
        <begin position="320"/>
        <end position="340"/>
    </location>
</feature>
<feature type="transmembrane region" description="Helical" evidence="2">
    <location>
        <begin position="347"/>
        <end position="367"/>
    </location>
</feature>
<feature type="binding site" description="axial binding residue" evidence="2">
    <location>
        <position position="83"/>
    </location>
    <ligand>
        <name>heme b</name>
        <dbReference type="ChEBI" id="CHEBI:60344"/>
        <label>b562</label>
    </ligand>
    <ligandPart>
        <name>Fe</name>
        <dbReference type="ChEBI" id="CHEBI:18248"/>
    </ligandPart>
</feature>
<feature type="binding site" description="axial binding residue" evidence="2">
    <location>
        <position position="97"/>
    </location>
    <ligand>
        <name>heme b</name>
        <dbReference type="ChEBI" id="CHEBI:60344"/>
        <label>b566</label>
    </ligand>
    <ligandPart>
        <name>Fe</name>
        <dbReference type="ChEBI" id="CHEBI:18248"/>
    </ligandPart>
</feature>
<feature type="binding site" description="axial binding residue" evidence="2">
    <location>
        <position position="182"/>
    </location>
    <ligand>
        <name>heme b</name>
        <dbReference type="ChEBI" id="CHEBI:60344"/>
        <label>b562</label>
    </ligand>
    <ligandPart>
        <name>Fe</name>
        <dbReference type="ChEBI" id="CHEBI:18248"/>
    </ligandPart>
</feature>
<feature type="binding site" description="axial binding residue" evidence="2">
    <location>
        <position position="196"/>
    </location>
    <ligand>
        <name>heme b</name>
        <dbReference type="ChEBI" id="CHEBI:60344"/>
        <label>b566</label>
    </ligand>
    <ligandPart>
        <name>Fe</name>
        <dbReference type="ChEBI" id="CHEBI:18248"/>
    </ligandPart>
</feature>
<feature type="binding site" evidence="2">
    <location>
        <position position="201"/>
    </location>
    <ligand>
        <name>a ubiquinone</name>
        <dbReference type="ChEBI" id="CHEBI:16389"/>
    </ligand>
</feature>
<organism>
    <name type="scientific">Sylvilagus palustris</name>
    <name type="common">Marsh rabbit</name>
    <dbReference type="NCBI Taxonomy" id="50380"/>
    <lineage>
        <taxon>Eukaryota</taxon>
        <taxon>Metazoa</taxon>
        <taxon>Chordata</taxon>
        <taxon>Craniata</taxon>
        <taxon>Vertebrata</taxon>
        <taxon>Euteleostomi</taxon>
        <taxon>Mammalia</taxon>
        <taxon>Eutheria</taxon>
        <taxon>Euarchontoglires</taxon>
        <taxon>Glires</taxon>
        <taxon>Lagomorpha</taxon>
        <taxon>Leporidae</taxon>
        <taxon>Sylvilagus</taxon>
    </lineage>
</organism>
<protein>
    <recommendedName>
        <fullName>Cytochrome b</fullName>
    </recommendedName>
    <alternativeName>
        <fullName>Complex III subunit 3</fullName>
    </alternativeName>
    <alternativeName>
        <fullName>Complex III subunit III</fullName>
    </alternativeName>
    <alternativeName>
        <fullName>Cytochrome b-c1 complex subunit 3</fullName>
    </alternativeName>
    <alternativeName>
        <fullName>Ubiquinol-cytochrome-c reductase complex cytochrome b subunit</fullName>
    </alternativeName>
</protein>
<evidence type="ECO:0000250" key="1"/>
<evidence type="ECO:0000250" key="2">
    <source>
        <dbReference type="UniProtKB" id="P00157"/>
    </source>
</evidence>
<evidence type="ECO:0000255" key="3">
    <source>
        <dbReference type="PROSITE-ProRule" id="PRU00967"/>
    </source>
</evidence>
<evidence type="ECO:0000255" key="4">
    <source>
        <dbReference type="PROSITE-ProRule" id="PRU00968"/>
    </source>
</evidence>
<accession>Q6ELV7</accession>
<sequence length="379" mass="42701">MTNIRKTHPLLKIVNHSLIDLPTPSNISAWWNFGSLLGLCLIIQILTGLFLAMHYTSDTLTAFSSVTHICRDVNYGWLIRYLHANGASMFFICLYMHVGRGIYYGSYTYLETWNIGIILLFAVMATAFMGYVLPWGQMSFWGATVITNLLSAIPYIGSTLVEWIWGGFSVDKATLTRFFAFHFILPFIIAALVMVHLLFLHETGSNNPSGIPSDSDKIPFHPYYTIKDALGFLALILLLLLLVLFSPDLLGDPDNYTPANPLNTTPHIKPEWYFLFAYAILRSIPNKLGGVLALVMSILVLAIIPLLHMSKQRSMMFRPISQILFWVLVADLLTLTWIGGQPVEHPFITIGQVASILYFTIILILMPLASLIENKILKW</sequence>
<dbReference type="EMBL" id="AY292727">
    <property type="protein sequence ID" value="AAS54923.1"/>
    <property type="molecule type" value="Genomic_DNA"/>
</dbReference>
<dbReference type="SMR" id="Q6ELV7"/>
<dbReference type="GO" id="GO:0005743">
    <property type="term" value="C:mitochondrial inner membrane"/>
    <property type="evidence" value="ECO:0007669"/>
    <property type="project" value="UniProtKB-SubCell"/>
</dbReference>
<dbReference type="GO" id="GO:0045275">
    <property type="term" value="C:respiratory chain complex III"/>
    <property type="evidence" value="ECO:0007669"/>
    <property type="project" value="InterPro"/>
</dbReference>
<dbReference type="GO" id="GO:0046872">
    <property type="term" value="F:metal ion binding"/>
    <property type="evidence" value="ECO:0007669"/>
    <property type="project" value="UniProtKB-KW"/>
</dbReference>
<dbReference type="GO" id="GO:0008121">
    <property type="term" value="F:ubiquinol-cytochrome-c reductase activity"/>
    <property type="evidence" value="ECO:0007669"/>
    <property type="project" value="InterPro"/>
</dbReference>
<dbReference type="GO" id="GO:0006122">
    <property type="term" value="P:mitochondrial electron transport, ubiquinol to cytochrome c"/>
    <property type="evidence" value="ECO:0007669"/>
    <property type="project" value="TreeGrafter"/>
</dbReference>
<dbReference type="CDD" id="cd00290">
    <property type="entry name" value="cytochrome_b_C"/>
    <property type="match status" value="1"/>
</dbReference>
<dbReference type="CDD" id="cd00284">
    <property type="entry name" value="Cytochrome_b_N"/>
    <property type="match status" value="1"/>
</dbReference>
<dbReference type="FunFam" id="1.20.810.10:FF:000002">
    <property type="entry name" value="Cytochrome b"/>
    <property type="match status" value="1"/>
</dbReference>
<dbReference type="Gene3D" id="1.20.810.10">
    <property type="entry name" value="Cytochrome Bc1 Complex, Chain C"/>
    <property type="match status" value="1"/>
</dbReference>
<dbReference type="InterPro" id="IPR005798">
    <property type="entry name" value="Cyt_b/b6_C"/>
</dbReference>
<dbReference type="InterPro" id="IPR036150">
    <property type="entry name" value="Cyt_b/b6_C_sf"/>
</dbReference>
<dbReference type="InterPro" id="IPR005797">
    <property type="entry name" value="Cyt_b/b6_N"/>
</dbReference>
<dbReference type="InterPro" id="IPR027387">
    <property type="entry name" value="Cytb/b6-like_sf"/>
</dbReference>
<dbReference type="InterPro" id="IPR030689">
    <property type="entry name" value="Cytochrome_b"/>
</dbReference>
<dbReference type="InterPro" id="IPR048260">
    <property type="entry name" value="Cytochrome_b_C_euk/bac"/>
</dbReference>
<dbReference type="InterPro" id="IPR048259">
    <property type="entry name" value="Cytochrome_b_N_euk/bac"/>
</dbReference>
<dbReference type="InterPro" id="IPR016174">
    <property type="entry name" value="Di-haem_cyt_TM"/>
</dbReference>
<dbReference type="PANTHER" id="PTHR19271">
    <property type="entry name" value="CYTOCHROME B"/>
    <property type="match status" value="1"/>
</dbReference>
<dbReference type="PANTHER" id="PTHR19271:SF16">
    <property type="entry name" value="CYTOCHROME B"/>
    <property type="match status" value="1"/>
</dbReference>
<dbReference type="Pfam" id="PF00032">
    <property type="entry name" value="Cytochrom_B_C"/>
    <property type="match status" value="1"/>
</dbReference>
<dbReference type="Pfam" id="PF00033">
    <property type="entry name" value="Cytochrome_B"/>
    <property type="match status" value="1"/>
</dbReference>
<dbReference type="PIRSF" id="PIRSF038885">
    <property type="entry name" value="COB"/>
    <property type="match status" value="1"/>
</dbReference>
<dbReference type="SUPFAM" id="SSF81648">
    <property type="entry name" value="a domain/subunit of cytochrome bc1 complex (Ubiquinol-cytochrome c reductase)"/>
    <property type="match status" value="1"/>
</dbReference>
<dbReference type="SUPFAM" id="SSF81342">
    <property type="entry name" value="Transmembrane di-heme cytochromes"/>
    <property type="match status" value="1"/>
</dbReference>
<dbReference type="PROSITE" id="PS51003">
    <property type="entry name" value="CYTB_CTER"/>
    <property type="match status" value="1"/>
</dbReference>
<dbReference type="PROSITE" id="PS51002">
    <property type="entry name" value="CYTB_NTER"/>
    <property type="match status" value="1"/>
</dbReference>
<keyword id="KW-0249">Electron transport</keyword>
<keyword id="KW-0349">Heme</keyword>
<keyword id="KW-0408">Iron</keyword>
<keyword id="KW-0472">Membrane</keyword>
<keyword id="KW-0479">Metal-binding</keyword>
<keyword id="KW-0496">Mitochondrion</keyword>
<keyword id="KW-0999">Mitochondrion inner membrane</keyword>
<keyword id="KW-0679">Respiratory chain</keyword>
<keyword id="KW-0812">Transmembrane</keyword>
<keyword id="KW-1133">Transmembrane helix</keyword>
<keyword id="KW-0813">Transport</keyword>
<keyword id="KW-0830">Ubiquinone</keyword>
<name>CYB_SYLPA</name>
<gene>
    <name type="primary">MT-CYB</name>
    <name type="synonym">COB</name>
    <name type="synonym">CYTB</name>
    <name type="synonym">MTCYB</name>
</gene>
<geneLocation type="mitochondrion"/>
<proteinExistence type="inferred from homology"/>
<comment type="function">
    <text evidence="2">Component of the ubiquinol-cytochrome c reductase complex (complex III or cytochrome b-c1 complex) that is part of the mitochondrial respiratory chain. The b-c1 complex mediates electron transfer from ubiquinol to cytochrome c. Contributes to the generation of a proton gradient across the mitochondrial membrane that is then used for ATP synthesis.</text>
</comment>
<comment type="cofactor">
    <cofactor evidence="2">
        <name>heme b</name>
        <dbReference type="ChEBI" id="CHEBI:60344"/>
    </cofactor>
    <text evidence="2">Binds 2 heme b groups non-covalently.</text>
</comment>
<comment type="subunit">
    <text evidence="2">The cytochrome bc1 complex contains 11 subunits: 3 respiratory subunits (MT-CYB, CYC1 and UQCRFS1), 2 core proteins (UQCRC1 and UQCRC2) and 6 low-molecular weight proteins (UQCRH/QCR6, UQCRB/QCR7, UQCRQ/QCR8, UQCR10/QCR9, UQCR11/QCR10 and a cleavage product of UQCRFS1). This cytochrome bc1 complex then forms a dimer.</text>
</comment>
<comment type="subcellular location">
    <subcellularLocation>
        <location evidence="2">Mitochondrion inner membrane</location>
        <topology evidence="2">Multi-pass membrane protein</topology>
    </subcellularLocation>
</comment>
<comment type="miscellaneous">
    <text evidence="1">Heme 1 (or BL or b562) is low-potential and absorbs at about 562 nm, and heme 2 (or BH or b566) is high-potential and absorbs at about 566 nm.</text>
</comment>
<comment type="similarity">
    <text evidence="3 4">Belongs to the cytochrome b family.</text>
</comment>
<comment type="caution">
    <text evidence="2">The full-length protein contains only eight transmembrane helices, not nine as predicted by bioinformatics tools.</text>
</comment>